<keyword id="KW-0963">Cytoplasm</keyword>
<keyword id="KW-0342">GTP-binding</keyword>
<keyword id="KW-0547">Nucleotide-binding</keyword>
<keyword id="KW-0648">Protein biosynthesis</keyword>
<evidence type="ECO:0000255" key="1">
    <source>
        <dbReference type="HAMAP-Rule" id="MF_00072"/>
    </source>
</evidence>
<protein>
    <recommendedName>
        <fullName evidence="1">Peptide chain release factor 3</fullName>
        <shortName evidence="1">RF-3</shortName>
    </recommendedName>
</protein>
<organism>
    <name type="scientific">Francisella philomiragia subsp. philomiragia (strain ATCC 25017 / CCUG 19701 / FSC 153 / O#319-036)</name>
    <dbReference type="NCBI Taxonomy" id="484022"/>
    <lineage>
        <taxon>Bacteria</taxon>
        <taxon>Pseudomonadati</taxon>
        <taxon>Pseudomonadota</taxon>
        <taxon>Gammaproteobacteria</taxon>
        <taxon>Thiotrichales</taxon>
        <taxon>Francisellaceae</taxon>
        <taxon>Francisella</taxon>
    </lineage>
</organism>
<reference key="1">
    <citation type="submission" date="2007-12" db="EMBL/GenBank/DDBJ databases">
        <title>Complete sequence of chromosome of Francisella philomiragia subsp. philomiragia ATCC 25017.</title>
        <authorList>
            <consortium name="US DOE Joint Genome Institute"/>
            <person name="Copeland A."/>
            <person name="Lucas S."/>
            <person name="Lapidus A."/>
            <person name="Barry K."/>
            <person name="Detter J.C."/>
            <person name="Glavina del Rio T."/>
            <person name="Hammon N."/>
            <person name="Israni S."/>
            <person name="Dalin E."/>
            <person name="Tice H."/>
            <person name="Pitluck S."/>
            <person name="Chain P."/>
            <person name="Malfatti S."/>
            <person name="Shin M."/>
            <person name="Vergez L."/>
            <person name="Schmutz J."/>
            <person name="Larimer F."/>
            <person name="Land M."/>
            <person name="Hauser L."/>
            <person name="Richardson P."/>
        </authorList>
    </citation>
    <scope>NUCLEOTIDE SEQUENCE [LARGE SCALE GENOMIC DNA]</scope>
    <source>
        <strain>ATCC 25017 / CCUG 19701 / FSC 153 / O#319-036</strain>
    </source>
</reference>
<name>RF3_FRAP2</name>
<comment type="function">
    <text evidence="1">Increases the formation of ribosomal termination complexes and stimulates activities of RF-1 and RF-2. It binds guanine nucleotides and has strong preference for UGA stop codons. It may interact directly with the ribosome. The stimulation of RF-1 and RF-2 is significantly reduced by GTP and GDP, but not by GMP.</text>
</comment>
<comment type="subcellular location">
    <subcellularLocation>
        <location evidence="1">Cytoplasm</location>
    </subcellularLocation>
</comment>
<comment type="similarity">
    <text evidence="1">Belongs to the TRAFAC class translation factor GTPase superfamily. Classic translation factor GTPase family. PrfC subfamily.</text>
</comment>
<proteinExistence type="inferred from homology"/>
<sequence>MNDILKEIAKRRTFAIISHPDAGKTTITEKMLLFGNAIKTAGTVKAKKSGVHATSDWMEMEKERGISITTSVMQFPYNGKVVNLLDTPGHEDFSEDTYRTLTAVDSALMVVDAVKGVEDRTIKLMNVCRLRDTPIVTFMNKFDRDTRDPLELLDEVEDIMKIKCAPMNWPIGMGKFFKGVYDLYNDEVTLFEGGHGHEIHPYKKIKGLANAKDQIGADLFDDLEMEIDLVRGASHEFDQEAFLKGELTPVYFGTALANFGVKEMMDGFTTYAPEPQPRETNERLVNTDENKLTGFVFKIQANMDDKHRDRIAFFRICSGKYEKGMKIYHERTGKMMQVSKALTFMAGEREQVEEGYAGDIIGLHNHGSIQIGDSFTQGEKLKFKGIPNFAPEIFKRVKLNDPLKMKALQKGLVQLSEEGATQVFKPMISNDLVLGAVGVLQFDVVAQRLASEYNVKCSYEGVNVSLARWIFCDDEKKLNDFKKKYEVNLSYDGAGYLTYLAPTGVNLQLAQDKNPDIIFSATREH</sequence>
<dbReference type="EMBL" id="CP000937">
    <property type="protein sequence ID" value="ABZ87244.1"/>
    <property type="molecule type" value="Genomic_DNA"/>
</dbReference>
<dbReference type="SMR" id="B0TWY6"/>
<dbReference type="KEGG" id="fph:Fphi_1020"/>
<dbReference type="eggNOG" id="COG4108">
    <property type="taxonomic scope" value="Bacteria"/>
</dbReference>
<dbReference type="HOGENOM" id="CLU_002794_2_1_6"/>
<dbReference type="GO" id="GO:0005829">
    <property type="term" value="C:cytosol"/>
    <property type="evidence" value="ECO:0007669"/>
    <property type="project" value="TreeGrafter"/>
</dbReference>
<dbReference type="GO" id="GO:0005525">
    <property type="term" value="F:GTP binding"/>
    <property type="evidence" value="ECO:0007669"/>
    <property type="project" value="UniProtKB-UniRule"/>
</dbReference>
<dbReference type="GO" id="GO:0003924">
    <property type="term" value="F:GTPase activity"/>
    <property type="evidence" value="ECO:0007669"/>
    <property type="project" value="InterPro"/>
</dbReference>
<dbReference type="GO" id="GO:0097216">
    <property type="term" value="F:guanosine tetraphosphate binding"/>
    <property type="evidence" value="ECO:0007669"/>
    <property type="project" value="UniProtKB-ARBA"/>
</dbReference>
<dbReference type="GO" id="GO:0016150">
    <property type="term" value="F:translation release factor activity, codon nonspecific"/>
    <property type="evidence" value="ECO:0007669"/>
    <property type="project" value="TreeGrafter"/>
</dbReference>
<dbReference type="GO" id="GO:0016149">
    <property type="term" value="F:translation release factor activity, codon specific"/>
    <property type="evidence" value="ECO:0007669"/>
    <property type="project" value="UniProtKB-UniRule"/>
</dbReference>
<dbReference type="GO" id="GO:0006449">
    <property type="term" value="P:regulation of translational termination"/>
    <property type="evidence" value="ECO:0007669"/>
    <property type="project" value="UniProtKB-UniRule"/>
</dbReference>
<dbReference type="CDD" id="cd04169">
    <property type="entry name" value="RF3"/>
    <property type="match status" value="1"/>
</dbReference>
<dbReference type="CDD" id="cd16259">
    <property type="entry name" value="RF3_III"/>
    <property type="match status" value="1"/>
</dbReference>
<dbReference type="FunFam" id="2.40.30.10:FF:000040">
    <property type="entry name" value="Peptide chain release factor 3"/>
    <property type="match status" value="1"/>
</dbReference>
<dbReference type="FunFam" id="3.30.70.3280:FF:000001">
    <property type="entry name" value="Peptide chain release factor 3"/>
    <property type="match status" value="1"/>
</dbReference>
<dbReference type="FunFam" id="3.40.50.300:FF:000542">
    <property type="entry name" value="Peptide chain release factor 3"/>
    <property type="match status" value="1"/>
</dbReference>
<dbReference type="Gene3D" id="3.40.50.300">
    <property type="entry name" value="P-loop containing nucleotide triphosphate hydrolases"/>
    <property type="match status" value="1"/>
</dbReference>
<dbReference type="Gene3D" id="3.30.70.3280">
    <property type="entry name" value="Peptide chain release factor 3, domain III"/>
    <property type="match status" value="1"/>
</dbReference>
<dbReference type="Gene3D" id="2.40.30.10">
    <property type="entry name" value="Translation factors"/>
    <property type="match status" value="1"/>
</dbReference>
<dbReference type="HAMAP" id="MF_00072">
    <property type="entry name" value="Rel_fac_3"/>
    <property type="match status" value="1"/>
</dbReference>
<dbReference type="InterPro" id="IPR053905">
    <property type="entry name" value="EF-G-like_DII"/>
</dbReference>
<dbReference type="InterPro" id="IPR035647">
    <property type="entry name" value="EFG_III/V"/>
</dbReference>
<dbReference type="InterPro" id="IPR031157">
    <property type="entry name" value="G_TR_CS"/>
</dbReference>
<dbReference type="InterPro" id="IPR027417">
    <property type="entry name" value="P-loop_NTPase"/>
</dbReference>
<dbReference type="InterPro" id="IPR004548">
    <property type="entry name" value="PrfC"/>
</dbReference>
<dbReference type="InterPro" id="IPR032090">
    <property type="entry name" value="RF3_C"/>
</dbReference>
<dbReference type="InterPro" id="IPR038467">
    <property type="entry name" value="RF3_dom_3_sf"/>
</dbReference>
<dbReference type="InterPro" id="IPR041732">
    <property type="entry name" value="RF3_GTP-bd"/>
</dbReference>
<dbReference type="InterPro" id="IPR005225">
    <property type="entry name" value="Small_GTP-bd"/>
</dbReference>
<dbReference type="InterPro" id="IPR000795">
    <property type="entry name" value="T_Tr_GTP-bd_dom"/>
</dbReference>
<dbReference type="InterPro" id="IPR009000">
    <property type="entry name" value="Transl_B-barrel_sf"/>
</dbReference>
<dbReference type="NCBIfam" id="TIGR00503">
    <property type="entry name" value="prfC"/>
    <property type="match status" value="1"/>
</dbReference>
<dbReference type="NCBIfam" id="NF001964">
    <property type="entry name" value="PRK00741.1"/>
    <property type="match status" value="1"/>
</dbReference>
<dbReference type="NCBIfam" id="TIGR00231">
    <property type="entry name" value="small_GTP"/>
    <property type="match status" value="1"/>
</dbReference>
<dbReference type="PANTHER" id="PTHR43556">
    <property type="entry name" value="PEPTIDE CHAIN RELEASE FACTOR RF3"/>
    <property type="match status" value="1"/>
</dbReference>
<dbReference type="PANTHER" id="PTHR43556:SF2">
    <property type="entry name" value="PEPTIDE CHAIN RELEASE FACTOR RF3"/>
    <property type="match status" value="1"/>
</dbReference>
<dbReference type="Pfam" id="PF22042">
    <property type="entry name" value="EF-G_D2"/>
    <property type="match status" value="1"/>
</dbReference>
<dbReference type="Pfam" id="PF00009">
    <property type="entry name" value="GTP_EFTU"/>
    <property type="match status" value="1"/>
</dbReference>
<dbReference type="Pfam" id="PF16658">
    <property type="entry name" value="RF3_C"/>
    <property type="match status" value="1"/>
</dbReference>
<dbReference type="PRINTS" id="PR00315">
    <property type="entry name" value="ELONGATNFCT"/>
</dbReference>
<dbReference type="SUPFAM" id="SSF54980">
    <property type="entry name" value="EF-G C-terminal domain-like"/>
    <property type="match status" value="1"/>
</dbReference>
<dbReference type="SUPFAM" id="SSF52540">
    <property type="entry name" value="P-loop containing nucleoside triphosphate hydrolases"/>
    <property type="match status" value="1"/>
</dbReference>
<dbReference type="SUPFAM" id="SSF50447">
    <property type="entry name" value="Translation proteins"/>
    <property type="match status" value="1"/>
</dbReference>
<dbReference type="PROSITE" id="PS00301">
    <property type="entry name" value="G_TR_1"/>
    <property type="match status" value="1"/>
</dbReference>
<dbReference type="PROSITE" id="PS51722">
    <property type="entry name" value="G_TR_2"/>
    <property type="match status" value="1"/>
</dbReference>
<accession>B0TWY6</accession>
<feature type="chain" id="PRO_1000075159" description="Peptide chain release factor 3">
    <location>
        <begin position="1"/>
        <end position="525"/>
    </location>
</feature>
<feature type="domain" description="tr-type G">
    <location>
        <begin position="9"/>
        <end position="276"/>
    </location>
</feature>
<feature type="binding site" evidence="1">
    <location>
        <begin position="18"/>
        <end position="25"/>
    </location>
    <ligand>
        <name>GTP</name>
        <dbReference type="ChEBI" id="CHEBI:37565"/>
    </ligand>
</feature>
<feature type="binding site" evidence="1">
    <location>
        <begin position="86"/>
        <end position="90"/>
    </location>
    <ligand>
        <name>GTP</name>
        <dbReference type="ChEBI" id="CHEBI:37565"/>
    </ligand>
</feature>
<feature type="binding site" evidence="1">
    <location>
        <begin position="140"/>
        <end position="143"/>
    </location>
    <ligand>
        <name>GTP</name>
        <dbReference type="ChEBI" id="CHEBI:37565"/>
    </ligand>
</feature>
<gene>
    <name evidence="1" type="primary">prfC</name>
    <name type="ordered locus">Fphi_1020</name>
</gene>